<accession>P44796</accession>
<name>HFLD_HAEIN</name>
<sequence length="205" mass="23235">MKNYHDIVLALAGVCQSAKLVHQLATESRADSETFLTALNSLFITQPQRIEDVFGGEVRHLKLGLETLIHQLNAQGDQNLTRYWLSLLALEGKLSKNSDAKQTLGNRISRLKEQEIHYARDSETMLSIMANIYSDIISPLGKKIHILGSPDYLRQELVQNKIRAVLLAGIRSAVLWKQMGGTKWQILFFRRKLLATAKQIYSSIY</sequence>
<keyword id="KW-0997">Cell inner membrane</keyword>
<keyword id="KW-1003">Cell membrane</keyword>
<keyword id="KW-0963">Cytoplasm</keyword>
<keyword id="KW-0472">Membrane</keyword>
<keyword id="KW-1185">Reference proteome</keyword>
<organism>
    <name type="scientific">Haemophilus influenzae (strain ATCC 51907 / DSM 11121 / KW20 / Rd)</name>
    <dbReference type="NCBI Taxonomy" id="71421"/>
    <lineage>
        <taxon>Bacteria</taxon>
        <taxon>Pseudomonadati</taxon>
        <taxon>Pseudomonadota</taxon>
        <taxon>Gammaproteobacteria</taxon>
        <taxon>Pasteurellales</taxon>
        <taxon>Pasteurellaceae</taxon>
        <taxon>Haemophilus</taxon>
    </lineage>
</organism>
<evidence type="ECO:0000255" key="1">
    <source>
        <dbReference type="HAMAP-Rule" id="MF_00695"/>
    </source>
</evidence>
<dbReference type="EMBL" id="L42023">
    <property type="protein sequence ID" value="AAC22298.1"/>
    <property type="molecule type" value="Genomic_DNA"/>
</dbReference>
<dbReference type="PIR" id="I64155">
    <property type="entry name" value="I64155"/>
</dbReference>
<dbReference type="RefSeq" id="NP_438798.1">
    <property type="nucleotide sequence ID" value="NC_000907.1"/>
</dbReference>
<dbReference type="SMR" id="P44796"/>
<dbReference type="STRING" id="71421.HI_0638"/>
<dbReference type="EnsemblBacteria" id="AAC22298">
    <property type="protein sequence ID" value="AAC22298"/>
    <property type="gene ID" value="HI_0638"/>
</dbReference>
<dbReference type="KEGG" id="hin:HI_0638"/>
<dbReference type="PATRIC" id="fig|71421.8.peg.666"/>
<dbReference type="eggNOG" id="COG2915">
    <property type="taxonomic scope" value="Bacteria"/>
</dbReference>
<dbReference type="HOGENOM" id="CLU_098920_0_0_6"/>
<dbReference type="OrthoDB" id="9788031at2"/>
<dbReference type="PhylomeDB" id="P44796"/>
<dbReference type="BioCyc" id="HINF71421:G1GJ1-669-MONOMER"/>
<dbReference type="Proteomes" id="UP000000579">
    <property type="component" value="Chromosome"/>
</dbReference>
<dbReference type="GO" id="GO:0005737">
    <property type="term" value="C:cytoplasm"/>
    <property type="evidence" value="ECO:0007669"/>
    <property type="project" value="UniProtKB-SubCell"/>
</dbReference>
<dbReference type="GO" id="GO:0005886">
    <property type="term" value="C:plasma membrane"/>
    <property type="evidence" value="ECO:0007669"/>
    <property type="project" value="UniProtKB-SubCell"/>
</dbReference>
<dbReference type="FunFam" id="1.10.3890.10:FF:000001">
    <property type="entry name" value="High frequency lysogenization protein HflD homolog"/>
    <property type="match status" value="1"/>
</dbReference>
<dbReference type="Gene3D" id="1.10.3890.10">
    <property type="entry name" value="HflD-like"/>
    <property type="match status" value="1"/>
</dbReference>
<dbReference type="HAMAP" id="MF_00695">
    <property type="entry name" value="HflD_protein"/>
    <property type="match status" value="1"/>
</dbReference>
<dbReference type="InterPro" id="IPR007451">
    <property type="entry name" value="HflD"/>
</dbReference>
<dbReference type="InterPro" id="IPR035932">
    <property type="entry name" value="HflD-like_sf"/>
</dbReference>
<dbReference type="NCBIfam" id="NF001246">
    <property type="entry name" value="PRK00218.1-2"/>
    <property type="match status" value="1"/>
</dbReference>
<dbReference type="NCBIfam" id="NF001248">
    <property type="entry name" value="PRK00218.1-4"/>
    <property type="match status" value="1"/>
</dbReference>
<dbReference type="PANTHER" id="PTHR38100">
    <property type="entry name" value="HIGH FREQUENCY LYSOGENIZATION PROTEIN HFLD"/>
    <property type="match status" value="1"/>
</dbReference>
<dbReference type="PANTHER" id="PTHR38100:SF1">
    <property type="entry name" value="HIGH FREQUENCY LYSOGENIZATION PROTEIN HFLD"/>
    <property type="match status" value="1"/>
</dbReference>
<dbReference type="Pfam" id="PF04356">
    <property type="entry name" value="DUF489"/>
    <property type="match status" value="1"/>
</dbReference>
<dbReference type="SUPFAM" id="SSF101322">
    <property type="entry name" value="YcfC-like"/>
    <property type="match status" value="1"/>
</dbReference>
<proteinExistence type="inferred from homology"/>
<comment type="subcellular location">
    <subcellularLocation>
        <location>Cytoplasm</location>
    </subcellularLocation>
    <subcellularLocation>
        <location evidence="1">Cell inner membrane</location>
        <topology evidence="1">Peripheral membrane protein</topology>
        <orientation evidence="1">Cytoplasmic side</orientation>
    </subcellularLocation>
</comment>
<comment type="similarity">
    <text evidence="1">Belongs to the HflD family.</text>
</comment>
<feature type="chain" id="PRO_0000071580" description="High frequency lysogenization protein HflD homolog">
    <location>
        <begin position="1"/>
        <end position="205"/>
    </location>
</feature>
<protein>
    <recommendedName>
        <fullName evidence="1">High frequency lysogenization protein HflD homolog</fullName>
    </recommendedName>
</protein>
<gene>
    <name evidence="1" type="primary">hflD</name>
    <name type="ordered locus">HI_0638</name>
</gene>
<reference key="1">
    <citation type="journal article" date="1995" name="Science">
        <title>Whole-genome random sequencing and assembly of Haemophilus influenzae Rd.</title>
        <authorList>
            <person name="Fleischmann R.D."/>
            <person name="Adams M.D."/>
            <person name="White O."/>
            <person name="Clayton R.A."/>
            <person name="Kirkness E.F."/>
            <person name="Kerlavage A.R."/>
            <person name="Bult C.J."/>
            <person name="Tomb J.-F."/>
            <person name="Dougherty B.A."/>
            <person name="Merrick J.M."/>
            <person name="McKenney K."/>
            <person name="Sutton G.G."/>
            <person name="FitzHugh W."/>
            <person name="Fields C.A."/>
            <person name="Gocayne J.D."/>
            <person name="Scott J.D."/>
            <person name="Shirley R."/>
            <person name="Liu L.-I."/>
            <person name="Glodek A."/>
            <person name="Kelley J.M."/>
            <person name="Weidman J.F."/>
            <person name="Phillips C.A."/>
            <person name="Spriggs T."/>
            <person name="Hedblom E."/>
            <person name="Cotton M.D."/>
            <person name="Utterback T.R."/>
            <person name="Hanna M.C."/>
            <person name="Nguyen D.T."/>
            <person name="Saudek D.M."/>
            <person name="Brandon R.C."/>
            <person name="Fine L.D."/>
            <person name="Fritchman J.L."/>
            <person name="Fuhrmann J.L."/>
            <person name="Geoghagen N.S.M."/>
            <person name="Gnehm C.L."/>
            <person name="McDonald L.A."/>
            <person name="Small K.V."/>
            <person name="Fraser C.M."/>
            <person name="Smith H.O."/>
            <person name="Venter J.C."/>
        </authorList>
    </citation>
    <scope>NUCLEOTIDE SEQUENCE [LARGE SCALE GENOMIC DNA]</scope>
    <source>
        <strain>ATCC 51907 / DSM 11121 / KW20 / Rd</strain>
    </source>
</reference>